<gene>
    <name evidence="1" type="primary">hdfR</name>
    <name type="ordered locus">EcolC_4238</name>
</gene>
<proteinExistence type="inferred from homology"/>
<protein>
    <recommendedName>
        <fullName evidence="1">HTH-type transcriptional regulator HdfR</fullName>
    </recommendedName>
    <alternativeName>
        <fullName evidence="1">H-NS-dependent flhDC regulator</fullName>
    </alternativeName>
</protein>
<accession>B1IWY2</accession>
<sequence>MDTELLKTFLEVSRTRHFGRAAESLYLTQSAVSFRIRQLENQLGVNLFTRHRNNIRLTAAGEKLLPYAETLMSTWQAARKEVAHTSRHNEFSIGASASLWECMLNQWLGRLYQNQDAHTGLQFEARIAQRQSLVKQLHERQLDLLITTEAPKMDEFSSQLLGYFTLALYTSAPSKLKGDLNYLRLEWGPDFQQHEAGLIGADEVPILTTSSAELAQQQIAMLNGCTWLPVSWARKKGGLHTVVDSTTLSRPLYAIWLQNSDKNALIRDLLKINVLDEVY</sequence>
<keyword id="KW-0238">DNA-binding</keyword>
<keyword id="KW-0678">Repressor</keyword>
<keyword id="KW-0804">Transcription</keyword>
<keyword id="KW-0805">Transcription regulation</keyword>
<dbReference type="EMBL" id="CP000946">
    <property type="protein sequence ID" value="ACA79834.1"/>
    <property type="molecule type" value="Genomic_DNA"/>
</dbReference>
<dbReference type="RefSeq" id="WP_000379245.1">
    <property type="nucleotide sequence ID" value="NZ_MTFT01000015.1"/>
</dbReference>
<dbReference type="SMR" id="B1IWY2"/>
<dbReference type="GeneID" id="93778187"/>
<dbReference type="KEGG" id="ecl:EcolC_4238"/>
<dbReference type="HOGENOM" id="CLU_039613_8_2_6"/>
<dbReference type="GO" id="GO:0003677">
    <property type="term" value="F:DNA binding"/>
    <property type="evidence" value="ECO:0007669"/>
    <property type="project" value="UniProtKB-KW"/>
</dbReference>
<dbReference type="GO" id="GO:0003700">
    <property type="term" value="F:DNA-binding transcription factor activity"/>
    <property type="evidence" value="ECO:0007669"/>
    <property type="project" value="UniProtKB-UniRule"/>
</dbReference>
<dbReference type="GO" id="GO:0045892">
    <property type="term" value="P:negative regulation of DNA-templated transcription"/>
    <property type="evidence" value="ECO:0007669"/>
    <property type="project" value="UniProtKB-UniRule"/>
</dbReference>
<dbReference type="FunFam" id="1.10.10.10:FF:000001">
    <property type="entry name" value="LysR family transcriptional regulator"/>
    <property type="match status" value="1"/>
</dbReference>
<dbReference type="Gene3D" id="3.40.190.10">
    <property type="entry name" value="Periplasmic binding protein-like II"/>
    <property type="match status" value="2"/>
</dbReference>
<dbReference type="Gene3D" id="1.10.10.10">
    <property type="entry name" value="Winged helix-like DNA-binding domain superfamily/Winged helix DNA-binding domain"/>
    <property type="match status" value="1"/>
</dbReference>
<dbReference type="HAMAP" id="MF_01233">
    <property type="entry name" value="HTH_type_HdfR"/>
    <property type="match status" value="1"/>
</dbReference>
<dbReference type="InterPro" id="IPR050176">
    <property type="entry name" value="LTTR"/>
</dbReference>
<dbReference type="InterPro" id="IPR005119">
    <property type="entry name" value="LysR_subst-bd"/>
</dbReference>
<dbReference type="InterPro" id="IPR020890">
    <property type="entry name" value="Tscrpt_reg_HTH_HdfR"/>
</dbReference>
<dbReference type="InterPro" id="IPR000847">
    <property type="entry name" value="Tscrpt_reg_HTH_LysR"/>
</dbReference>
<dbReference type="InterPro" id="IPR036388">
    <property type="entry name" value="WH-like_DNA-bd_sf"/>
</dbReference>
<dbReference type="InterPro" id="IPR036390">
    <property type="entry name" value="WH_DNA-bd_sf"/>
</dbReference>
<dbReference type="NCBIfam" id="NF002946">
    <property type="entry name" value="PRK03601.1"/>
    <property type="match status" value="1"/>
</dbReference>
<dbReference type="PANTHER" id="PTHR30579:SF8">
    <property type="entry name" value="HTH-TYPE TRANSCRIPTIONAL REGULATOR HDFR"/>
    <property type="match status" value="1"/>
</dbReference>
<dbReference type="PANTHER" id="PTHR30579">
    <property type="entry name" value="TRANSCRIPTIONAL REGULATOR"/>
    <property type="match status" value="1"/>
</dbReference>
<dbReference type="Pfam" id="PF00126">
    <property type="entry name" value="HTH_1"/>
    <property type="match status" value="1"/>
</dbReference>
<dbReference type="Pfam" id="PF03466">
    <property type="entry name" value="LysR_substrate"/>
    <property type="match status" value="1"/>
</dbReference>
<dbReference type="PRINTS" id="PR00039">
    <property type="entry name" value="HTHLYSR"/>
</dbReference>
<dbReference type="SUPFAM" id="SSF53850">
    <property type="entry name" value="Periplasmic binding protein-like II"/>
    <property type="match status" value="1"/>
</dbReference>
<dbReference type="SUPFAM" id="SSF46785">
    <property type="entry name" value="Winged helix' DNA-binding domain"/>
    <property type="match status" value="1"/>
</dbReference>
<dbReference type="PROSITE" id="PS50931">
    <property type="entry name" value="HTH_LYSR"/>
    <property type="match status" value="1"/>
</dbReference>
<reference key="1">
    <citation type="submission" date="2008-02" db="EMBL/GenBank/DDBJ databases">
        <title>Complete sequence of Escherichia coli C str. ATCC 8739.</title>
        <authorList>
            <person name="Copeland A."/>
            <person name="Lucas S."/>
            <person name="Lapidus A."/>
            <person name="Glavina del Rio T."/>
            <person name="Dalin E."/>
            <person name="Tice H."/>
            <person name="Bruce D."/>
            <person name="Goodwin L."/>
            <person name="Pitluck S."/>
            <person name="Kiss H."/>
            <person name="Brettin T."/>
            <person name="Detter J.C."/>
            <person name="Han C."/>
            <person name="Kuske C.R."/>
            <person name="Schmutz J."/>
            <person name="Larimer F."/>
            <person name="Land M."/>
            <person name="Hauser L."/>
            <person name="Kyrpides N."/>
            <person name="Mikhailova N."/>
            <person name="Ingram L."/>
            <person name="Richardson P."/>
        </authorList>
    </citation>
    <scope>NUCLEOTIDE SEQUENCE [LARGE SCALE GENOMIC DNA]</scope>
    <source>
        <strain>ATCC 8739 / DSM 1576 / NBRC 3972 / NCIMB 8545 / WDCM 00012 / Crooks</strain>
    </source>
</reference>
<name>HDFR_ECOLC</name>
<evidence type="ECO:0000255" key="1">
    <source>
        <dbReference type="HAMAP-Rule" id="MF_01233"/>
    </source>
</evidence>
<evidence type="ECO:0000305" key="2"/>
<comment type="function">
    <text evidence="1">Negatively regulates the transcription of the flagellar master operon flhDC by binding to the upstream region of the operon.</text>
</comment>
<comment type="similarity">
    <text evidence="2">Belongs to the LysR transcriptional regulatory family.</text>
</comment>
<organism>
    <name type="scientific">Escherichia coli (strain ATCC 8739 / DSM 1576 / NBRC 3972 / NCIMB 8545 / WDCM 00012 / Crooks)</name>
    <dbReference type="NCBI Taxonomy" id="481805"/>
    <lineage>
        <taxon>Bacteria</taxon>
        <taxon>Pseudomonadati</taxon>
        <taxon>Pseudomonadota</taxon>
        <taxon>Gammaproteobacteria</taxon>
        <taxon>Enterobacterales</taxon>
        <taxon>Enterobacteriaceae</taxon>
        <taxon>Escherichia</taxon>
    </lineage>
</organism>
<feature type="chain" id="PRO_1000085722" description="HTH-type transcriptional regulator HdfR">
    <location>
        <begin position="1"/>
        <end position="279"/>
    </location>
</feature>
<feature type="domain" description="HTH lysR-type" evidence="1">
    <location>
        <begin position="1"/>
        <end position="58"/>
    </location>
</feature>
<feature type="DNA-binding region" description="H-T-H motif" evidence="1">
    <location>
        <begin position="18"/>
        <end position="37"/>
    </location>
</feature>